<proteinExistence type="inferred from homology"/>
<keyword id="KW-0030">Aminoacyl-tRNA synthetase</keyword>
<keyword id="KW-0067">ATP-binding</keyword>
<keyword id="KW-0963">Cytoplasm</keyword>
<keyword id="KW-0436">Ligase</keyword>
<keyword id="KW-0547">Nucleotide-binding</keyword>
<keyword id="KW-0648">Protein biosynthesis</keyword>
<keyword id="KW-1185">Reference proteome</keyword>
<sequence length="580" mass="63493">MNLFAEMRALVLECVDQMVTAGQLPADLNMTNVTVEPPRDAAHGDMATNAAMVLAKPAGKKPRDIAEALAQLLAADARIASAEVAGPGFLNLRIAPTAWRAVLLSVLDKGTDFGRADIGAGQKVNVEYVSANPTGPLHVGHTRGAVFGDALASLLDYAGFDVTREYYINDGGAQVDVLARSVYLRYLEAHGQEVAFPDGTYPGDYLIPVGQQLKDLKGDSYVGQPEEAWLQDIRTFATDAMMDLIRADLKSLGVEMDVFYSEKSLYGTGRIEAAIEDLKSKGLIYDGVLEPPKGKKPEDWEPREQTLFKSTEHGDDVDRPVMKSDGSWTYFAPDIAYHYDKVSRGYDALIDVFGADHGGYVKRMKAAVSALSDGKVPLDIKLTQLVKLFKNGEPFKMSKRAGTFVTLRDVVDQVGPDVARFVMLTRKNDAMLDFDFDKVMEQSRENPVFYVQYAHARVASVMRKAEAAGIAVDMDTLKAADLSLLNHEAELGLIAKLSEWPRLVETAARSNEPHRVAFYLYELSGVFHGLWNRGNDVPELRFVQDDPKVTQAKIALARACSVVIAAGLGILGVTPAQEMR</sequence>
<gene>
    <name evidence="1" type="primary">argS</name>
    <name type="ordered locus">RD1_3165</name>
</gene>
<organism>
    <name type="scientific">Roseobacter denitrificans (strain ATCC 33942 / OCh 114)</name>
    <name type="common">Erythrobacter sp. (strain OCh 114)</name>
    <name type="synonym">Roseobacter denitrificans</name>
    <dbReference type="NCBI Taxonomy" id="375451"/>
    <lineage>
        <taxon>Bacteria</taxon>
        <taxon>Pseudomonadati</taxon>
        <taxon>Pseudomonadota</taxon>
        <taxon>Alphaproteobacteria</taxon>
        <taxon>Rhodobacterales</taxon>
        <taxon>Roseobacteraceae</taxon>
        <taxon>Roseobacter</taxon>
    </lineage>
</organism>
<name>SYR_ROSDO</name>
<protein>
    <recommendedName>
        <fullName evidence="1">Arginine--tRNA ligase</fullName>
        <ecNumber evidence="1">6.1.1.19</ecNumber>
    </recommendedName>
    <alternativeName>
        <fullName evidence="1">Arginyl-tRNA synthetase</fullName>
        <shortName evidence="1">ArgRS</shortName>
    </alternativeName>
</protein>
<evidence type="ECO:0000255" key="1">
    <source>
        <dbReference type="HAMAP-Rule" id="MF_00123"/>
    </source>
</evidence>
<dbReference type="EC" id="6.1.1.19" evidence="1"/>
<dbReference type="EMBL" id="CP000362">
    <property type="protein sequence ID" value="ABG32672.1"/>
    <property type="molecule type" value="Genomic_DNA"/>
</dbReference>
<dbReference type="RefSeq" id="WP_011569288.1">
    <property type="nucleotide sequence ID" value="NC_008209.1"/>
</dbReference>
<dbReference type="SMR" id="Q164C1"/>
<dbReference type="STRING" id="375451.RD1_3165"/>
<dbReference type="KEGG" id="rde:RD1_3165"/>
<dbReference type="eggNOG" id="COG0018">
    <property type="taxonomic scope" value="Bacteria"/>
</dbReference>
<dbReference type="HOGENOM" id="CLU_006406_0_1_5"/>
<dbReference type="OrthoDB" id="9803211at2"/>
<dbReference type="Proteomes" id="UP000007029">
    <property type="component" value="Chromosome"/>
</dbReference>
<dbReference type="GO" id="GO:0005737">
    <property type="term" value="C:cytoplasm"/>
    <property type="evidence" value="ECO:0007669"/>
    <property type="project" value="UniProtKB-SubCell"/>
</dbReference>
<dbReference type="GO" id="GO:0004814">
    <property type="term" value="F:arginine-tRNA ligase activity"/>
    <property type="evidence" value="ECO:0007669"/>
    <property type="project" value="UniProtKB-UniRule"/>
</dbReference>
<dbReference type="GO" id="GO:0005524">
    <property type="term" value="F:ATP binding"/>
    <property type="evidence" value="ECO:0007669"/>
    <property type="project" value="UniProtKB-UniRule"/>
</dbReference>
<dbReference type="GO" id="GO:0006420">
    <property type="term" value="P:arginyl-tRNA aminoacylation"/>
    <property type="evidence" value="ECO:0007669"/>
    <property type="project" value="UniProtKB-UniRule"/>
</dbReference>
<dbReference type="CDD" id="cd00671">
    <property type="entry name" value="ArgRS_core"/>
    <property type="match status" value="1"/>
</dbReference>
<dbReference type="FunFam" id="3.30.1360.70:FF:000003">
    <property type="entry name" value="Arginine--tRNA ligase"/>
    <property type="match status" value="1"/>
</dbReference>
<dbReference type="FunFam" id="3.40.50.620:FF:000062">
    <property type="entry name" value="Arginine--tRNA ligase"/>
    <property type="match status" value="1"/>
</dbReference>
<dbReference type="Gene3D" id="3.30.1360.70">
    <property type="entry name" value="Arginyl tRNA synthetase N-terminal domain"/>
    <property type="match status" value="1"/>
</dbReference>
<dbReference type="Gene3D" id="3.40.50.620">
    <property type="entry name" value="HUPs"/>
    <property type="match status" value="1"/>
</dbReference>
<dbReference type="Gene3D" id="1.10.730.10">
    <property type="entry name" value="Isoleucyl-tRNA Synthetase, Domain 1"/>
    <property type="match status" value="1"/>
</dbReference>
<dbReference type="HAMAP" id="MF_00123">
    <property type="entry name" value="Arg_tRNA_synth"/>
    <property type="match status" value="1"/>
</dbReference>
<dbReference type="InterPro" id="IPR001412">
    <property type="entry name" value="aa-tRNA-synth_I_CS"/>
</dbReference>
<dbReference type="InterPro" id="IPR001278">
    <property type="entry name" value="Arg-tRNA-ligase"/>
</dbReference>
<dbReference type="InterPro" id="IPR005148">
    <property type="entry name" value="Arg-tRNA-synth_N"/>
</dbReference>
<dbReference type="InterPro" id="IPR036695">
    <property type="entry name" value="Arg-tRNA-synth_N_sf"/>
</dbReference>
<dbReference type="InterPro" id="IPR035684">
    <property type="entry name" value="ArgRS_core"/>
</dbReference>
<dbReference type="InterPro" id="IPR008909">
    <property type="entry name" value="DALR_anticod-bd"/>
</dbReference>
<dbReference type="InterPro" id="IPR014729">
    <property type="entry name" value="Rossmann-like_a/b/a_fold"/>
</dbReference>
<dbReference type="InterPro" id="IPR009080">
    <property type="entry name" value="tRNAsynth_Ia_anticodon-bd"/>
</dbReference>
<dbReference type="NCBIfam" id="TIGR00456">
    <property type="entry name" value="argS"/>
    <property type="match status" value="1"/>
</dbReference>
<dbReference type="PANTHER" id="PTHR11956:SF5">
    <property type="entry name" value="ARGININE--TRNA LIGASE, CYTOPLASMIC"/>
    <property type="match status" value="1"/>
</dbReference>
<dbReference type="PANTHER" id="PTHR11956">
    <property type="entry name" value="ARGINYL-TRNA SYNTHETASE"/>
    <property type="match status" value="1"/>
</dbReference>
<dbReference type="Pfam" id="PF03485">
    <property type="entry name" value="Arg_tRNA_synt_N"/>
    <property type="match status" value="1"/>
</dbReference>
<dbReference type="Pfam" id="PF05746">
    <property type="entry name" value="DALR_1"/>
    <property type="match status" value="1"/>
</dbReference>
<dbReference type="Pfam" id="PF00750">
    <property type="entry name" value="tRNA-synt_1d"/>
    <property type="match status" value="1"/>
</dbReference>
<dbReference type="PRINTS" id="PR01038">
    <property type="entry name" value="TRNASYNTHARG"/>
</dbReference>
<dbReference type="SMART" id="SM01016">
    <property type="entry name" value="Arg_tRNA_synt_N"/>
    <property type="match status" value="1"/>
</dbReference>
<dbReference type="SMART" id="SM00836">
    <property type="entry name" value="DALR_1"/>
    <property type="match status" value="1"/>
</dbReference>
<dbReference type="SUPFAM" id="SSF47323">
    <property type="entry name" value="Anticodon-binding domain of a subclass of class I aminoacyl-tRNA synthetases"/>
    <property type="match status" value="1"/>
</dbReference>
<dbReference type="SUPFAM" id="SSF55190">
    <property type="entry name" value="Arginyl-tRNA synthetase (ArgRS), N-terminal 'additional' domain"/>
    <property type="match status" value="1"/>
</dbReference>
<dbReference type="SUPFAM" id="SSF52374">
    <property type="entry name" value="Nucleotidylyl transferase"/>
    <property type="match status" value="1"/>
</dbReference>
<dbReference type="PROSITE" id="PS00178">
    <property type="entry name" value="AA_TRNA_LIGASE_I"/>
    <property type="match status" value="1"/>
</dbReference>
<comment type="catalytic activity">
    <reaction evidence="1">
        <text>tRNA(Arg) + L-arginine + ATP = L-arginyl-tRNA(Arg) + AMP + diphosphate</text>
        <dbReference type="Rhea" id="RHEA:20301"/>
        <dbReference type="Rhea" id="RHEA-COMP:9658"/>
        <dbReference type="Rhea" id="RHEA-COMP:9673"/>
        <dbReference type="ChEBI" id="CHEBI:30616"/>
        <dbReference type="ChEBI" id="CHEBI:32682"/>
        <dbReference type="ChEBI" id="CHEBI:33019"/>
        <dbReference type="ChEBI" id="CHEBI:78442"/>
        <dbReference type="ChEBI" id="CHEBI:78513"/>
        <dbReference type="ChEBI" id="CHEBI:456215"/>
        <dbReference type="EC" id="6.1.1.19"/>
    </reaction>
</comment>
<comment type="subunit">
    <text evidence="1">Monomer.</text>
</comment>
<comment type="subcellular location">
    <subcellularLocation>
        <location evidence="1">Cytoplasm</location>
    </subcellularLocation>
</comment>
<comment type="similarity">
    <text evidence="1">Belongs to the class-I aminoacyl-tRNA synthetase family.</text>
</comment>
<feature type="chain" id="PRO_1000018108" description="Arginine--tRNA ligase">
    <location>
        <begin position="1"/>
        <end position="580"/>
    </location>
</feature>
<feature type="short sequence motif" description="'HIGH' region">
    <location>
        <begin position="131"/>
        <end position="141"/>
    </location>
</feature>
<accession>Q164C1</accession>
<reference key="1">
    <citation type="journal article" date="2007" name="J. Bacteriol.">
        <title>The complete genome sequence of Roseobacter denitrificans reveals a mixotrophic rather than photosynthetic metabolism.</title>
        <authorList>
            <person name="Swingley W.D."/>
            <person name="Sadekar S."/>
            <person name="Mastrian S.D."/>
            <person name="Matthies H.J."/>
            <person name="Hao J."/>
            <person name="Ramos H."/>
            <person name="Acharya C.R."/>
            <person name="Conrad A.L."/>
            <person name="Taylor H.L."/>
            <person name="Dejesa L.C."/>
            <person name="Shah M.K."/>
            <person name="O'Huallachain M.E."/>
            <person name="Lince M.T."/>
            <person name="Blankenship R.E."/>
            <person name="Beatty J.T."/>
            <person name="Touchman J.W."/>
        </authorList>
    </citation>
    <scope>NUCLEOTIDE SEQUENCE [LARGE SCALE GENOMIC DNA]</scope>
    <source>
        <strain>ATCC 33942 / OCh 114</strain>
    </source>
</reference>